<organism>
    <name type="scientific">Salmonella agona (strain SL483)</name>
    <dbReference type="NCBI Taxonomy" id="454166"/>
    <lineage>
        <taxon>Bacteria</taxon>
        <taxon>Pseudomonadati</taxon>
        <taxon>Pseudomonadota</taxon>
        <taxon>Gammaproteobacteria</taxon>
        <taxon>Enterobacterales</taxon>
        <taxon>Enterobacteriaceae</taxon>
        <taxon>Salmonella</taxon>
    </lineage>
</organism>
<dbReference type="EMBL" id="CP001138">
    <property type="protein sequence ID" value="ACH49755.1"/>
    <property type="molecule type" value="Genomic_DNA"/>
</dbReference>
<dbReference type="RefSeq" id="WP_001279854.1">
    <property type="nucleotide sequence ID" value="NC_011149.1"/>
</dbReference>
<dbReference type="KEGG" id="sea:SeAg_B1446"/>
<dbReference type="HOGENOM" id="CLU_180697_1_0_6"/>
<dbReference type="Proteomes" id="UP000008819">
    <property type="component" value="Chromosome"/>
</dbReference>
<dbReference type="HAMAP" id="MF_01641">
    <property type="entry name" value="UPF0509"/>
    <property type="match status" value="1"/>
</dbReference>
<dbReference type="InterPro" id="IPR020887">
    <property type="entry name" value="UPF0509"/>
</dbReference>
<dbReference type="NCBIfam" id="NF010179">
    <property type="entry name" value="PRK13658.1"/>
    <property type="match status" value="1"/>
</dbReference>
<dbReference type="Pfam" id="PF23675">
    <property type="entry name" value="YciZ"/>
    <property type="match status" value="1"/>
</dbReference>
<gene>
    <name evidence="1" type="primary">yciZ</name>
    <name type="ordered locus">SeAg_B1446</name>
</gene>
<proteinExistence type="inferred from homology"/>
<comment type="similarity">
    <text evidence="1">Belongs to the UPF0509 family.</text>
</comment>
<sequence>MSDIEAQRIAARIDTVLDILVAGDYHSAINNLEILRAELLDQVKDGISPSQAPGSPWEI</sequence>
<name>YCIZ_SALA4</name>
<reference key="1">
    <citation type="journal article" date="2011" name="J. Bacteriol.">
        <title>Comparative genomics of 28 Salmonella enterica isolates: evidence for CRISPR-mediated adaptive sublineage evolution.</title>
        <authorList>
            <person name="Fricke W.F."/>
            <person name="Mammel M.K."/>
            <person name="McDermott P.F."/>
            <person name="Tartera C."/>
            <person name="White D.G."/>
            <person name="Leclerc J.E."/>
            <person name="Ravel J."/>
            <person name="Cebula T.A."/>
        </authorList>
    </citation>
    <scope>NUCLEOTIDE SEQUENCE [LARGE SCALE GENOMIC DNA]</scope>
    <source>
        <strain>SL483</strain>
    </source>
</reference>
<feature type="chain" id="PRO_1000186853" description="UPF0509 protein YciZ">
    <location>
        <begin position="1"/>
        <end position="59"/>
    </location>
</feature>
<protein>
    <recommendedName>
        <fullName evidence="1">UPF0509 protein YciZ</fullName>
    </recommendedName>
</protein>
<evidence type="ECO:0000255" key="1">
    <source>
        <dbReference type="HAMAP-Rule" id="MF_01641"/>
    </source>
</evidence>
<accession>B5F569</accession>